<accession>A6VQQ3</accession>
<dbReference type="EC" id="2.8.4.3" evidence="1"/>
<dbReference type="EMBL" id="CP000746">
    <property type="protein sequence ID" value="ABR75300.1"/>
    <property type="molecule type" value="Genomic_DNA"/>
</dbReference>
<dbReference type="RefSeq" id="WP_012073677.1">
    <property type="nucleotide sequence ID" value="NC_009655.1"/>
</dbReference>
<dbReference type="SMR" id="A6VQQ3"/>
<dbReference type="STRING" id="339671.Asuc_1952"/>
<dbReference type="KEGG" id="asu:Asuc_1952"/>
<dbReference type="eggNOG" id="COG0621">
    <property type="taxonomic scope" value="Bacteria"/>
</dbReference>
<dbReference type="HOGENOM" id="CLU_018697_2_0_6"/>
<dbReference type="OrthoDB" id="9805215at2"/>
<dbReference type="Proteomes" id="UP000001114">
    <property type="component" value="Chromosome"/>
</dbReference>
<dbReference type="GO" id="GO:0005829">
    <property type="term" value="C:cytosol"/>
    <property type="evidence" value="ECO:0007669"/>
    <property type="project" value="TreeGrafter"/>
</dbReference>
<dbReference type="GO" id="GO:0051539">
    <property type="term" value="F:4 iron, 4 sulfur cluster binding"/>
    <property type="evidence" value="ECO:0007669"/>
    <property type="project" value="UniProtKB-UniRule"/>
</dbReference>
<dbReference type="GO" id="GO:0046872">
    <property type="term" value="F:metal ion binding"/>
    <property type="evidence" value="ECO:0007669"/>
    <property type="project" value="UniProtKB-KW"/>
</dbReference>
<dbReference type="GO" id="GO:0035597">
    <property type="term" value="F:N6-isopentenyladenosine methylthiotransferase activity"/>
    <property type="evidence" value="ECO:0007669"/>
    <property type="project" value="TreeGrafter"/>
</dbReference>
<dbReference type="CDD" id="cd01335">
    <property type="entry name" value="Radical_SAM"/>
    <property type="match status" value="1"/>
</dbReference>
<dbReference type="FunFam" id="3.40.50.12160:FF:000001">
    <property type="entry name" value="tRNA-2-methylthio-N(6)-dimethylallyladenosine synthase"/>
    <property type="match status" value="1"/>
</dbReference>
<dbReference type="FunFam" id="3.80.30.20:FF:000001">
    <property type="entry name" value="tRNA-2-methylthio-N(6)-dimethylallyladenosine synthase 2"/>
    <property type="match status" value="1"/>
</dbReference>
<dbReference type="Gene3D" id="3.40.50.12160">
    <property type="entry name" value="Methylthiotransferase, N-terminal domain"/>
    <property type="match status" value="1"/>
</dbReference>
<dbReference type="Gene3D" id="3.80.30.20">
    <property type="entry name" value="tm_1862 like domain"/>
    <property type="match status" value="1"/>
</dbReference>
<dbReference type="HAMAP" id="MF_01864">
    <property type="entry name" value="tRNA_metthiotr_MiaB"/>
    <property type="match status" value="1"/>
</dbReference>
<dbReference type="InterPro" id="IPR006638">
    <property type="entry name" value="Elp3/MiaA/NifB-like_rSAM"/>
</dbReference>
<dbReference type="InterPro" id="IPR005839">
    <property type="entry name" value="Methylthiotransferase"/>
</dbReference>
<dbReference type="InterPro" id="IPR020612">
    <property type="entry name" value="Methylthiotransferase_CS"/>
</dbReference>
<dbReference type="InterPro" id="IPR013848">
    <property type="entry name" value="Methylthiotransferase_N"/>
</dbReference>
<dbReference type="InterPro" id="IPR038135">
    <property type="entry name" value="Methylthiotransferase_N_sf"/>
</dbReference>
<dbReference type="InterPro" id="IPR006463">
    <property type="entry name" value="MiaB_methiolase"/>
</dbReference>
<dbReference type="InterPro" id="IPR007197">
    <property type="entry name" value="rSAM"/>
</dbReference>
<dbReference type="InterPro" id="IPR023404">
    <property type="entry name" value="rSAM_horseshoe"/>
</dbReference>
<dbReference type="InterPro" id="IPR002792">
    <property type="entry name" value="TRAM_dom"/>
</dbReference>
<dbReference type="NCBIfam" id="TIGR01574">
    <property type="entry name" value="miaB-methiolase"/>
    <property type="match status" value="1"/>
</dbReference>
<dbReference type="NCBIfam" id="TIGR00089">
    <property type="entry name" value="MiaB/RimO family radical SAM methylthiotransferase"/>
    <property type="match status" value="1"/>
</dbReference>
<dbReference type="PANTHER" id="PTHR43020">
    <property type="entry name" value="CDK5 REGULATORY SUBUNIT-ASSOCIATED PROTEIN 1"/>
    <property type="match status" value="1"/>
</dbReference>
<dbReference type="PANTHER" id="PTHR43020:SF2">
    <property type="entry name" value="MITOCHONDRIAL TRNA METHYLTHIOTRANSFERASE CDK5RAP1"/>
    <property type="match status" value="1"/>
</dbReference>
<dbReference type="Pfam" id="PF04055">
    <property type="entry name" value="Radical_SAM"/>
    <property type="match status" value="1"/>
</dbReference>
<dbReference type="Pfam" id="PF01938">
    <property type="entry name" value="TRAM"/>
    <property type="match status" value="1"/>
</dbReference>
<dbReference type="Pfam" id="PF00919">
    <property type="entry name" value="UPF0004"/>
    <property type="match status" value="1"/>
</dbReference>
<dbReference type="SFLD" id="SFLDF00273">
    <property type="entry name" value="(dimethylallyl)adenosine_tRNA"/>
    <property type="match status" value="1"/>
</dbReference>
<dbReference type="SFLD" id="SFLDG01082">
    <property type="entry name" value="B12-binding_domain_containing"/>
    <property type="match status" value="1"/>
</dbReference>
<dbReference type="SFLD" id="SFLDS00029">
    <property type="entry name" value="Radical_SAM"/>
    <property type="match status" value="1"/>
</dbReference>
<dbReference type="SMART" id="SM00729">
    <property type="entry name" value="Elp3"/>
    <property type="match status" value="1"/>
</dbReference>
<dbReference type="SUPFAM" id="SSF102114">
    <property type="entry name" value="Radical SAM enzymes"/>
    <property type="match status" value="1"/>
</dbReference>
<dbReference type="PROSITE" id="PS51449">
    <property type="entry name" value="MTTASE_N"/>
    <property type="match status" value="1"/>
</dbReference>
<dbReference type="PROSITE" id="PS01278">
    <property type="entry name" value="MTTASE_RADICAL"/>
    <property type="match status" value="1"/>
</dbReference>
<dbReference type="PROSITE" id="PS51918">
    <property type="entry name" value="RADICAL_SAM"/>
    <property type="match status" value="1"/>
</dbReference>
<dbReference type="PROSITE" id="PS50926">
    <property type="entry name" value="TRAM"/>
    <property type="match status" value="1"/>
</dbReference>
<keyword id="KW-0004">4Fe-4S</keyword>
<keyword id="KW-0963">Cytoplasm</keyword>
<keyword id="KW-0408">Iron</keyword>
<keyword id="KW-0411">Iron-sulfur</keyword>
<keyword id="KW-0479">Metal-binding</keyword>
<keyword id="KW-1185">Reference proteome</keyword>
<keyword id="KW-0949">S-adenosyl-L-methionine</keyword>
<keyword id="KW-0808">Transferase</keyword>
<keyword id="KW-0819">tRNA processing</keyword>
<evidence type="ECO:0000255" key="1">
    <source>
        <dbReference type="HAMAP-Rule" id="MF_01864"/>
    </source>
</evidence>
<evidence type="ECO:0000255" key="2">
    <source>
        <dbReference type="PROSITE-ProRule" id="PRU01266"/>
    </source>
</evidence>
<comment type="function">
    <text evidence="1">Catalyzes the methylthiolation of N6-(dimethylallyl)adenosine (i(6)A), leading to the formation of 2-methylthio-N6-(dimethylallyl)adenosine (ms(2)i(6)A) at position 37 in tRNAs that read codons beginning with uridine.</text>
</comment>
<comment type="catalytic activity">
    <reaction evidence="1">
        <text>N(6)-dimethylallyladenosine(37) in tRNA + (sulfur carrier)-SH + AH2 + 2 S-adenosyl-L-methionine = 2-methylsulfanyl-N(6)-dimethylallyladenosine(37) in tRNA + (sulfur carrier)-H + 5'-deoxyadenosine + L-methionine + A + S-adenosyl-L-homocysteine + 2 H(+)</text>
        <dbReference type="Rhea" id="RHEA:37067"/>
        <dbReference type="Rhea" id="RHEA-COMP:10375"/>
        <dbReference type="Rhea" id="RHEA-COMP:10376"/>
        <dbReference type="Rhea" id="RHEA-COMP:14737"/>
        <dbReference type="Rhea" id="RHEA-COMP:14739"/>
        <dbReference type="ChEBI" id="CHEBI:13193"/>
        <dbReference type="ChEBI" id="CHEBI:15378"/>
        <dbReference type="ChEBI" id="CHEBI:17319"/>
        <dbReference type="ChEBI" id="CHEBI:17499"/>
        <dbReference type="ChEBI" id="CHEBI:29917"/>
        <dbReference type="ChEBI" id="CHEBI:57844"/>
        <dbReference type="ChEBI" id="CHEBI:57856"/>
        <dbReference type="ChEBI" id="CHEBI:59789"/>
        <dbReference type="ChEBI" id="CHEBI:64428"/>
        <dbReference type="ChEBI" id="CHEBI:74415"/>
        <dbReference type="ChEBI" id="CHEBI:74417"/>
        <dbReference type="EC" id="2.8.4.3"/>
    </reaction>
</comment>
<comment type="cofactor">
    <cofactor evidence="1">
        <name>[4Fe-4S] cluster</name>
        <dbReference type="ChEBI" id="CHEBI:49883"/>
    </cofactor>
    <text evidence="1">Binds 2 [4Fe-4S] clusters. One cluster is coordinated with 3 cysteines and an exchangeable S-adenosyl-L-methionine.</text>
</comment>
<comment type="subunit">
    <text evidence="1">Monomer.</text>
</comment>
<comment type="subcellular location">
    <subcellularLocation>
        <location evidence="1">Cytoplasm</location>
    </subcellularLocation>
</comment>
<comment type="similarity">
    <text evidence="1">Belongs to the methylthiotransferase family. MiaB subfamily.</text>
</comment>
<gene>
    <name evidence="1" type="primary">miaB</name>
    <name type="ordered locus">Asuc_1952</name>
</gene>
<organism>
    <name type="scientific">Actinobacillus succinogenes (strain ATCC 55618 / DSM 22257 / CCUG 43843 / 130Z)</name>
    <dbReference type="NCBI Taxonomy" id="339671"/>
    <lineage>
        <taxon>Bacteria</taxon>
        <taxon>Pseudomonadati</taxon>
        <taxon>Pseudomonadota</taxon>
        <taxon>Gammaproteobacteria</taxon>
        <taxon>Pasteurellales</taxon>
        <taxon>Pasteurellaceae</taxon>
        <taxon>Actinobacillus</taxon>
    </lineage>
</organism>
<sequence length="474" mass="53373">MTQKLHIKTWGCQMNEYDSAKIADLLLSTHGLELTEEAEQADVLLLNTCSIREKAQEKVFSQLGRWKTWKNEKPGLIIGVGGCVASQEGEHIRERAPFVDIIFGPQTLHRLPEMINQIRGGKSSVVDVSFPEIEKFDCLPEPKAEGPTAFVSIMEGCNKYCTYCVVPYTRGEEVSRPLDDVLFEVAQLADQGVREINLLGQNVNAYRGPTHDGGICTFAELLRLVASIDGIDRLRFTTSHPIEFTDDIIDVYADTPELVSFLHLPVQSGADRILTMMKRGHTALEYKSIIRKLRKVRPDIQISSDFIVGFPGETNEEFEQTMNLIADVNFDMSFSFVYSARPGTPAADMPDDVSEEEKKQRLYLLQQRINNQAAKFSRAMLGTEQRVLVEGPSKKDIMELTGRTENNRIVNFKGTPDMIGKFVDIQITDVFTNSLRGDVIRTEDEMGLRVEQSPQSVIRRTRKEDELGVGKYVA</sequence>
<name>MIAB_ACTSZ</name>
<proteinExistence type="inferred from homology"/>
<protein>
    <recommendedName>
        <fullName evidence="1">tRNA-2-methylthio-N(6)-dimethylallyladenosine synthase</fullName>
        <ecNumber evidence="1">2.8.4.3</ecNumber>
    </recommendedName>
    <alternativeName>
        <fullName evidence="1">(Dimethylallyl)adenosine tRNA methylthiotransferase MiaB</fullName>
    </alternativeName>
    <alternativeName>
        <fullName evidence="1">tRNA-i(6)A37 methylthiotransferase</fullName>
    </alternativeName>
</protein>
<feature type="chain" id="PRO_0000374096" description="tRNA-2-methylthio-N(6)-dimethylallyladenosine synthase">
    <location>
        <begin position="1"/>
        <end position="474"/>
    </location>
</feature>
<feature type="domain" description="MTTase N-terminal" evidence="1">
    <location>
        <begin position="3"/>
        <end position="120"/>
    </location>
</feature>
<feature type="domain" description="Radical SAM core" evidence="2">
    <location>
        <begin position="143"/>
        <end position="375"/>
    </location>
</feature>
<feature type="domain" description="TRAM" evidence="1">
    <location>
        <begin position="378"/>
        <end position="441"/>
    </location>
</feature>
<feature type="binding site" evidence="1">
    <location>
        <position position="12"/>
    </location>
    <ligand>
        <name>[4Fe-4S] cluster</name>
        <dbReference type="ChEBI" id="CHEBI:49883"/>
        <label>1</label>
    </ligand>
</feature>
<feature type="binding site" evidence="1">
    <location>
        <position position="49"/>
    </location>
    <ligand>
        <name>[4Fe-4S] cluster</name>
        <dbReference type="ChEBI" id="CHEBI:49883"/>
        <label>1</label>
    </ligand>
</feature>
<feature type="binding site" evidence="1">
    <location>
        <position position="83"/>
    </location>
    <ligand>
        <name>[4Fe-4S] cluster</name>
        <dbReference type="ChEBI" id="CHEBI:49883"/>
        <label>1</label>
    </ligand>
</feature>
<feature type="binding site" evidence="1">
    <location>
        <position position="157"/>
    </location>
    <ligand>
        <name>[4Fe-4S] cluster</name>
        <dbReference type="ChEBI" id="CHEBI:49883"/>
        <label>2</label>
        <note>4Fe-4S-S-AdoMet</note>
    </ligand>
</feature>
<feature type="binding site" evidence="1">
    <location>
        <position position="161"/>
    </location>
    <ligand>
        <name>[4Fe-4S] cluster</name>
        <dbReference type="ChEBI" id="CHEBI:49883"/>
        <label>2</label>
        <note>4Fe-4S-S-AdoMet</note>
    </ligand>
</feature>
<feature type="binding site" evidence="1">
    <location>
        <position position="164"/>
    </location>
    <ligand>
        <name>[4Fe-4S] cluster</name>
        <dbReference type="ChEBI" id="CHEBI:49883"/>
        <label>2</label>
        <note>4Fe-4S-S-AdoMet</note>
    </ligand>
</feature>
<reference key="1">
    <citation type="journal article" date="2010" name="BMC Genomics">
        <title>A genomic perspective on the potential of Actinobacillus succinogenes for industrial succinate production.</title>
        <authorList>
            <person name="McKinlay J.B."/>
            <person name="Laivenieks M."/>
            <person name="Schindler B.D."/>
            <person name="McKinlay A.A."/>
            <person name="Siddaramappa S."/>
            <person name="Challacombe J.F."/>
            <person name="Lowry S.R."/>
            <person name="Clum A."/>
            <person name="Lapidus A.L."/>
            <person name="Burkhart K.B."/>
            <person name="Harkins V."/>
            <person name="Vieille C."/>
        </authorList>
    </citation>
    <scope>NUCLEOTIDE SEQUENCE [LARGE SCALE GENOMIC DNA]</scope>
    <source>
        <strain>ATCC 55618 / DSM 22257 / CCUG 43843 / 130Z</strain>
    </source>
</reference>